<reference key="1">
    <citation type="journal article" date="1991" name="J. Biol. Chem.">
        <title>Identification, sequence, and expression of the gene encoding a Mr 35,000 subunit of the vaccinia virus DNA-dependent RNA polymerase.</title>
        <authorList>
            <person name="Amegadzie B.Y."/>
            <person name="Ahn B.-Y."/>
            <person name="Moss B."/>
        </authorList>
    </citation>
    <scope>NUCLEOTIDE SEQUENCE [GENOMIC DNA]</scope>
</reference>
<reference key="2">
    <citation type="submission" date="2003-02" db="EMBL/GenBank/DDBJ databases">
        <title>Sequencing of the coding region of Vaccinia-WR to an average 9-fold redundancy and an error rate of 0.16/10kb.</title>
        <authorList>
            <person name="Esposito J.J."/>
            <person name="Frace A.M."/>
            <person name="Sammons S.A."/>
            <person name="Olsen-Rasmussen M."/>
            <person name="Osborne J."/>
            <person name="Wohlhueter R."/>
        </authorList>
    </citation>
    <scope>NUCLEOTIDE SEQUENCE [LARGE SCALE GENOMIC DNA]</scope>
</reference>
<reference key="3">
    <citation type="journal article" date="2004" name="J. Virol.">
        <title>Vaccinia virus A28L gene encodes an essential protein component of the virion membrane with intramolecular disulfide bonds formed by the viral cytoplasmic redox pathway.</title>
        <authorList>
            <person name="Senkevich T.G."/>
            <person name="Ward B.M."/>
            <person name="Moss B."/>
        </authorList>
    </citation>
    <scope>CHARACTERIZATION</scope>
    <scope>DISULFIDE BONDS</scope>
</reference>
<reference key="4">
    <citation type="journal article" date="2004" name="J. Virol.">
        <title>Vaccinia virus entry into cells is dependent on a virion surface protein encoded by the A28L gene.</title>
        <authorList>
            <person name="Senkevich T.G."/>
            <person name="Ward B.M."/>
            <person name="Moss B."/>
        </authorList>
    </citation>
    <scope>FUNCTION</scope>
</reference>
<reference key="5">
    <citation type="journal article" date="2005" name="Proc. Natl. Acad. Sci. U.S.A.">
        <title>Poxvirus multiprotein entry-fusion complex.</title>
        <authorList>
            <person name="Senkevich T.G."/>
            <person name="Ojeda S."/>
            <person name="Townsley A."/>
            <person name="Nelson G.E."/>
            <person name="Moss B."/>
        </authorList>
    </citation>
    <scope>IDENTIFICATION IN A COMPLEX WITH OPG143; OPG147; OPG086; OPG094; OPG107; OPG104 AND OPG099</scope>
</reference>
<reference key="6">
    <citation type="journal article" date="2008" name="J. Virol.">
        <title>A conserved sequence within the H2 subunit of the vaccinia virus entry/fusion complex is important for interaction with the A28 subunit and infectivity.</title>
        <authorList>
            <person name="Nelson G.E."/>
            <person name="Wagenaar T.R."/>
            <person name="Moss B."/>
        </authorList>
    </citation>
    <scope>INTERACTION WITH PROTEIN OPG107</scope>
    <scope>INDUCTION</scope>
</reference>
<sequence>MNSLSIFFIVVATAAVCLLFIQGYSIYENYGNIKEFNATHAAFEYSKSIGGTPALDRRVQDVNDTISDVKQKWRCVVYPGNGFVSASIFGFQAEVGPNNTRSIRKFNTMQQCIDFTFSDVININIYNPCVVPNINNAECQFLKSVL</sequence>
<dbReference type="EMBL" id="M61187">
    <property type="protein sequence ID" value="AAA48325.1"/>
    <property type="molecule type" value="Genomic_DNA"/>
</dbReference>
<dbReference type="EMBL" id="X57318">
    <property type="protein sequence ID" value="CAA40578.1"/>
    <property type="molecule type" value="Genomic_DNA"/>
</dbReference>
<dbReference type="EMBL" id="AY243312">
    <property type="protein sequence ID" value="AAO89430.1"/>
    <property type="molecule type" value="Genomic_DNA"/>
</dbReference>
<dbReference type="PDB" id="8GQO">
    <property type="method" value="NMR"/>
    <property type="chains" value="A=38-146"/>
</dbReference>
<dbReference type="PDBsum" id="8GQO"/>
<dbReference type="SMR" id="P68633"/>
<dbReference type="IntAct" id="P68633">
    <property type="interactions" value="2"/>
</dbReference>
<dbReference type="MINT" id="P68633"/>
<dbReference type="TCDB" id="1.G.11.1.1">
    <property type="family name" value="the poxvirus cell entry protein complex (pep-c) family"/>
</dbReference>
<dbReference type="KEGG" id="vg:3707681"/>
<dbReference type="Proteomes" id="UP000000344">
    <property type="component" value="Genome"/>
</dbReference>
<dbReference type="GO" id="GO:0016020">
    <property type="term" value="C:membrane"/>
    <property type="evidence" value="ECO:0007669"/>
    <property type="project" value="UniProtKB-KW"/>
</dbReference>
<dbReference type="GO" id="GO:0019031">
    <property type="term" value="C:viral envelope"/>
    <property type="evidence" value="ECO:0007669"/>
    <property type="project" value="UniProtKB-KW"/>
</dbReference>
<dbReference type="GO" id="GO:0055036">
    <property type="term" value="C:virion membrane"/>
    <property type="evidence" value="ECO:0007669"/>
    <property type="project" value="UniProtKB-SubCell"/>
</dbReference>
<dbReference type="GO" id="GO:0039663">
    <property type="term" value="P:membrane fusion involved in viral entry into host cell"/>
    <property type="evidence" value="ECO:0007669"/>
    <property type="project" value="UniProtKB-KW"/>
</dbReference>
<dbReference type="GO" id="GO:0046718">
    <property type="term" value="P:symbiont entry into host cell"/>
    <property type="evidence" value="ECO:0007669"/>
    <property type="project" value="UniProtKB-KW"/>
</dbReference>
<dbReference type="InterPro" id="IPR007664">
    <property type="entry name" value="Poxvirus_A28"/>
</dbReference>
<dbReference type="Pfam" id="PF04584">
    <property type="entry name" value="Pox_A28"/>
    <property type="match status" value="1"/>
</dbReference>
<protein>
    <recommendedName>
        <fullName>Envelope protein OPG155</fullName>
    </recommendedName>
</protein>
<organismHost>
    <name type="scientific">Bos taurus</name>
    <name type="common">Bovine</name>
    <dbReference type="NCBI Taxonomy" id="9913"/>
</organismHost>
<organism>
    <name type="scientific">Vaccinia virus (strain Western Reserve)</name>
    <name type="common">VACV</name>
    <name type="synonym">Vaccinia virus (strain WR)</name>
    <dbReference type="NCBI Taxonomy" id="10254"/>
    <lineage>
        <taxon>Viruses</taxon>
        <taxon>Varidnaviria</taxon>
        <taxon>Bamfordvirae</taxon>
        <taxon>Nucleocytoviricota</taxon>
        <taxon>Pokkesviricetes</taxon>
        <taxon>Chitovirales</taxon>
        <taxon>Poxviridae</taxon>
        <taxon>Chordopoxvirinae</taxon>
        <taxon>Orthopoxvirus</taxon>
        <taxon>Vaccinia virus</taxon>
    </lineage>
</organism>
<feature type="chain" id="PRO_0000099300" description="Envelope protein OPG155">
    <location>
        <begin position="1"/>
        <end position="146"/>
    </location>
</feature>
<feature type="transmembrane region" description="Helical; Signal-anchor for type III membrane protein" evidence="1">
    <location>
        <begin position="1"/>
        <end position="21"/>
    </location>
</feature>
<feature type="topological domain" description="Virion surface" evidence="1">
    <location>
        <begin position="22"/>
        <end position="146"/>
    </location>
</feature>
<feature type="sequence conflict" description="In Ref. 2; AAO89430." evidence="5" ref="2">
    <original>N</original>
    <variation>D</variation>
    <location>
        <position position="124"/>
    </location>
</feature>
<feature type="helix" evidence="6">
    <location>
        <begin position="68"/>
        <end position="71"/>
    </location>
</feature>
<feature type="strand" evidence="6">
    <location>
        <begin position="74"/>
        <end position="78"/>
    </location>
</feature>
<feature type="turn" evidence="6">
    <location>
        <begin position="79"/>
        <end position="81"/>
    </location>
</feature>
<feature type="strand" evidence="6">
    <location>
        <begin position="82"/>
        <end position="87"/>
    </location>
</feature>
<feature type="strand" evidence="6">
    <location>
        <begin position="90"/>
        <end position="96"/>
    </location>
</feature>
<feature type="turn" evidence="6">
    <location>
        <begin position="97"/>
        <end position="99"/>
    </location>
</feature>
<feature type="strand" evidence="6">
    <location>
        <begin position="100"/>
        <end position="103"/>
    </location>
</feature>
<feature type="strand" evidence="6">
    <location>
        <begin position="105"/>
        <end position="108"/>
    </location>
</feature>
<feature type="helix" evidence="6">
    <location>
        <begin position="109"/>
        <end position="117"/>
    </location>
</feature>
<feature type="helix" evidence="6">
    <location>
        <begin position="119"/>
        <end position="121"/>
    </location>
</feature>
<feature type="helix" evidence="6">
    <location>
        <begin position="136"/>
        <end position="145"/>
    </location>
</feature>
<accession>P68633</accession>
<accession>P21086</accession>
<accession>Q80HU6</accession>
<evidence type="ECO:0000255" key="1"/>
<evidence type="ECO:0000269" key="2">
    <source>
    </source>
</evidence>
<evidence type="ECO:0000269" key="3">
    <source>
    </source>
</evidence>
<evidence type="ECO:0000269" key="4">
    <source>
    </source>
</evidence>
<evidence type="ECO:0000305" key="5"/>
<evidence type="ECO:0007829" key="6">
    <source>
        <dbReference type="PDB" id="8GQO"/>
    </source>
</evidence>
<keyword id="KW-0002">3D-structure</keyword>
<keyword id="KW-1015">Disulfide bond</keyword>
<keyword id="KW-1168">Fusion of virus membrane with host membrane</keyword>
<keyword id="KW-0426">Late protein</keyword>
<keyword id="KW-0472">Membrane</keyword>
<keyword id="KW-0597">Phosphoprotein</keyword>
<keyword id="KW-1185">Reference proteome</keyword>
<keyword id="KW-0735">Signal-anchor</keyword>
<keyword id="KW-0812">Transmembrane</keyword>
<keyword id="KW-1133">Transmembrane helix</keyword>
<keyword id="KW-0261">Viral envelope protein</keyword>
<keyword id="KW-1162">Viral penetration into host cytoplasm</keyword>
<keyword id="KW-0946">Virion</keyword>
<keyword id="KW-1160">Virus entry into host cell</keyword>
<gene>
    <name type="primary">OPG155</name>
    <name type="ordered locus">VACWR151</name>
    <name type="ORF">A28L</name>
</gene>
<name>PG155_VACCW</name>
<comment type="function">
    <text evidence="2">Envelope protein required for virus entry into host cell and for cell-cell fusion (syncytium formation).</text>
</comment>
<comment type="subunit">
    <text evidence="3 4">Part of a stable entry-fusion complex (EFC) which is at least composed of proteins OPG143, OPG147, OPG155, OPG086, OPG094, OPG107, OPG104, and OPG099. Formation of the viral membrane is necessary for the assembly of the complex. Interacts directly with protein OPG107.</text>
</comment>
<comment type="interaction">
    <interactant intactId="EBI-6969231">
        <id>P68633</id>
    </interactant>
    <interactant intactId="EBI-7564589">
        <id>P08583</id>
        <label>OPG107</label>
    </interactant>
    <organismsDiffer>false</organismsDiffer>
    <experiments>3</experiments>
</comment>
<comment type="subcellular location">
    <subcellularLocation>
        <location evidence="5">Virion membrane</location>
        <topology evidence="5">Single-pass type III membrane protein</topology>
    </subcellularLocation>
    <text>Component of the mature virion (MV) membrane.</text>
</comment>
<comment type="induction">
    <text evidence="4">Expressed in the late phase of the viral replicative cycle.</text>
</comment>
<comment type="PTM">
    <text>Contains two intramolecular disulfide bonds. They are created by the viral disulfide bond formation pathway, a poxvirus-specific pathway that operates on the cytoplasmic side of the MV membranes.</text>
</comment>
<comment type="similarity">
    <text evidence="5">Belongs to the orthopoxvirus OPG155 protein family.</text>
</comment>
<proteinExistence type="evidence at protein level"/>